<organism>
    <name type="scientific">Salmonella gallinarum (strain 287/91 / NCTC 13346)</name>
    <dbReference type="NCBI Taxonomy" id="550538"/>
    <lineage>
        <taxon>Bacteria</taxon>
        <taxon>Pseudomonadati</taxon>
        <taxon>Pseudomonadota</taxon>
        <taxon>Gammaproteobacteria</taxon>
        <taxon>Enterobacterales</taxon>
        <taxon>Enterobacteriaceae</taxon>
        <taxon>Salmonella</taxon>
    </lineage>
</organism>
<comment type="similarity">
    <text evidence="1">Belongs to the UPF0304 family.</text>
</comment>
<evidence type="ECO:0000255" key="1">
    <source>
        <dbReference type="HAMAP-Rule" id="MF_00762"/>
    </source>
</evidence>
<feature type="chain" id="PRO_1000198344" description="UPF0304 protein YfbU">
    <location>
        <begin position="1"/>
        <end position="164"/>
    </location>
</feature>
<proteinExistence type="inferred from homology"/>
<name>YFBU_SALG2</name>
<accession>B5RCG0</accession>
<sequence>MEMTNAQRLILSNQYKMMTMLDPTNAERYRRLQTIIERGYGLQMRELDREFGELTEETCRTIIDIMEMYHALHVSWTNLKDTQAIDERRVTFLGFDAATEARYLGYVRFMVNIEGRYTHFDAGTHGFNAQTPMWEKYQRMLNVWHACPRQYHLSANEINQIINA</sequence>
<protein>
    <recommendedName>
        <fullName evidence="1">UPF0304 protein YfbU</fullName>
    </recommendedName>
</protein>
<reference key="1">
    <citation type="journal article" date="2008" name="Genome Res.">
        <title>Comparative genome analysis of Salmonella enteritidis PT4 and Salmonella gallinarum 287/91 provides insights into evolutionary and host adaptation pathways.</title>
        <authorList>
            <person name="Thomson N.R."/>
            <person name="Clayton D.J."/>
            <person name="Windhorst D."/>
            <person name="Vernikos G."/>
            <person name="Davidson S."/>
            <person name="Churcher C."/>
            <person name="Quail M.A."/>
            <person name="Stevens M."/>
            <person name="Jones M.A."/>
            <person name="Watson M."/>
            <person name="Barron A."/>
            <person name="Layton A."/>
            <person name="Pickard D."/>
            <person name="Kingsley R.A."/>
            <person name="Bignell A."/>
            <person name="Clark L."/>
            <person name="Harris B."/>
            <person name="Ormond D."/>
            <person name="Abdellah Z."/>
            <person name="Brooks K."/>
            <person name="Cherevach I."/>
            <person name="Chillingworth T."/>
            <person name="Woodward J."/>
            <person name="Norberczak H."/>
            <person name="Lord A."/>
            <person name="Arrowsmith C."/>
            <person name="Jagels K."/>
            <person name="Moule S."/>
            <person name="Mungall K."/>
            <person name="Saunders M."/>
            <person name="Whitehead S."/>
            <person name="Chabalgoity J.A."/>
            <person name="Maskell D."/>
            <person name="Humphreys T."/>
            <person name="Roberts M."/>
            <person name="Barrow P.A."/>
            <person name="Dougan G."/>
            <person name="Parkhill J."/>
        </authorList>
    </citation>
    <scope>NUCLEOTIDE SEQUENCE [LARGE SCALE GENOMIC DNA]</scope>
    <source>
        <strain>287/91 / NCTC 13346</strain>
    </source>
</reference>
<gene>
    <name evidence="1" type="primary">yfbU</name>
    <name type="ordered locus">SG2364</name>
</gene>
<dbReference type="EMBL" id="AM933173">
    <property type="protein sequence ID" value="CAR38194.1"/>
    <property type="molecule type" value="Genomic_DNA"/>
</dbReference>
<dbReference type="RefSeq" id="WP_000426135.1">
    <property type="nucleotide sequence ID" value="NC_011274.1"/>
</dbReference>
<dbReference type="SMR" id="B5RCG0"/>
<dbReference type="KEGG" id="seg:SG2364"/>
<dbReference type="HOGENOM" id="CLU_101021_1_0_6"/>
<dbReference type="Proteomes" id="UP000008321">
    <property type="component" value="Chromosome"/>
</dbReference>
<dbReference type="FunFam" id="1.10.3190.10:FF:000001">
    <property type="entry name" value="UPF0304 protein YfbU"/>
    <property type="match status" value="1"/>
</dbReference>
<dbReference type="Gene3D" id="1.10.287.680">
    <property type="entry name" value="Helix hairpin bin"/>
    <property type="match status" value="1"/>
</dbReference>
<dbReference type="Gene3D" id="1.10.3190.10">
    <property type="entry name" value="yfbu gene product, domain 2"/>
    <property type="match status" value="1"/>
</dbReference>
<dbReference type="HAMAP" id="MF_00762">
    <property type="entry name" value="UPF0304"/>
    <property type="match status" value="1"/>
</dbReference>
<dbReference type="InterPro" id="IPR005587">
    <property type="entry name" value="UPF0304_YfbU"/>
</dbReference>
<dbReference type="InterPro" id="IPR023146">
    <property type="entry name" value="YfbU_alpha-helical_sf"/>
</dbReference>
<dbReference type="InterPro" id="IPR023145">
    <property type="entry name" value="YfbU_helix-hairpin_sf"/>
</dbReference>
<dbReference type="NCBIfam" id="NF003936">
    <property type="entry name" value="PRK05445.1"/>
    <property type="match status" value="1"/>
</dbReference>
<dbReference type="Pfam" id="PF03887">
    <property type="entry name" value="YfbU"/>
    <property type="match status" value="1"/>
</dbReference>
<dbReference type="PIRSF" id="PIRSF006272">
    <property type="entry name" value="UCP006272"/>
    <property type="match status" value="1"/>
</dbReference>
<dbReference type="SUPFAM" id="SSF116960">
    <property type="entry name" value="YfbU-like"/>
    <property type="match status" value="1"/>
</dbReference>